<organism>
    <name type="scientific">Xenopus laevis</name>
    <name type="common">African clawed frog</name>
    <dbReference type="NCBI Taxonomy" id="8355"/>
    <lineage>
        <taxon>Eukaryota</taxon>
        <taxon>Metazoa</taxon>
        <taxon>Chordata</taxon>
        <taxon>Craniata</taxon>
        <taxon>Vertebrata</taxon>
        <taxon>Euteleostomi</taxon>
        <taxon>Amphibia</taxon>
        <taxon>Batrachia</taxon>
        <taxon>Anura</taxon>
        <taxon>Pipoidea</taxon>
        <taxon>Pipidae</taxon>
        <taxon>Xenopodinae</taxon>
        <taxon>Xenopus</taxon>
        <taxon>Xenopus</taxon>
    </lineage>
</organism>
<accession>Q7SY73</accession>
<gene>
    <name type="primary">abhd6-b</name>
</gene>
<name>ABH6B_XENLA</name>
<proteinExistence type="evidence at transcript level"/>
<reference key="1">
    <citation type="submission" date="2003-07" db="EMBL/GenBank/DDBJ databases">
        <authorList>
            <consortium name="NIH - Xenopus Gene Collection (XGC) project"/>
        </authorList>
    </citation>
    <scope>NUCLEOTIDE SEQUENCE [LARGE SCALE MRNA]</scope>
    <source>
        <tissue>Larva</tissue>
    </source>
</reference>
<keyword id="KW-0967">Endosome</keyword>
<keyword id="KW-0378">Hydrolase</keyword>
<keyword id="KW-0443">Lipid metabolism</keyword>
<keyword id="KW-0458">Lysosome</keyword>
<keyword id="KW-0472">Membrane</keyword>
<keyword id="KW-0496">Mitochondrion</keyword>
<keyword id="KW-1185">Reference proteome</keyword>
<keyword id="KW-0735">Signal-anchor</keyword>
<keyword id="KW-0812">Transmembrane</keyword>
<keyword id="KW-1133">Transmembrane helix</keyword>
<protein>
    <recommendedName>
        <fullName evidence="5">Monoacylglycerol lipase abhd6-B</fullName>
        <ecNumber evidence="3">3.1.1.23</ecNumber>
    </recommendedName>
    <alternativeName>
        <fullName>Abhydrolase domain-containing protein 6-B</fullName>
    </alternativeName>
</protein>
<dbReference type="EC" id="3.1.1.23" evidence="3"/>
<dbReference type="EMBL" id="BC054984">
    <property type="protein sequence ID" value="AAH54984.1"/>
    <property type="molecule type" value="mRNA"/>
</dbReference>
<dbReference type="RefSeq" id="NP_001080850.1">
    <property type="nucleotide sequence ID" value="NM_001087381.2"/>
</dbReference>
<dbReference type="SMR" id="Q7SY73"/>
<dbReference type="ESTHER" id="xenla-Q7SY73">
    <property type="family name" value="ABHD6-Lip"/>
</dbReference>
<dbReference type="DNASU" id="380544"/>
<dbReference type="GeneID" id="380544"/>
<dbReference type="KEGG" id="xla:380544"/>
<dbReference type="AGR" id="Xenbase:XB-GENE-6256516"/>
<dbReference type="CTD" id="380544"/>
<dbReference type="Xenbase" id="XB-GENE-6256516">
    <property type="gene designation" value="abhd6.L"/>
</dbReference>
<dbReference type="OrthoDB" id="6431331at2759"/>
<dbReference type="Proteomes" id="UP000186698">
    <property type="component" value="Chromosome 4L"/>
</dbReference>
<dbReference type="Bgee" id="380544">
    <property type="expression patterns" value="Expressed in intestine and 19 other cell types or tissues"/>
</dbReference>
<dbReference type="GO" id="GO:0032281">
    <property type="term" value="C:AMPA glutamate receptor complex"/>
    <property type="evidence" value="ECO:0000318"/>
    <property type="project" value="GO_Central"/>
</dbReference>
<dbReference type="GO" id="GO:0031902">
    <property type="term" value="C:late endosome membrane"/>
    <property type="evidence" value="ECO:0000250"/>
    <property type="project" value="UniProtKB"/>
</dbReference>
<dbReference type="GO" id="GO:0005765">
    <property type="term" value="C:lysosomal membrane"/>
    <property type="evidence" value="ECO:0000250"/>
    <property type="project" value="UniProtKB"/>
</dbReference>
<dbReference type="GO" id="GO:0016020">
    <property type="term" value="C:membrane"/>
    <property type="evidence" value="ECO:0000250"/>
    <property type="project" value="UniProtKB"/>
</dbReference>
<dbReference type="GO" id="GO:0031966">
    <property type="term" value="C:mitochondrial membrane"/>
    <property type="evidence" value="ECO:0007669"/>
    <property type="project" value="UniProtKB-SubCell"/>
</dbReference>
<dbReference type="GO" id="GO:0047372">
    <property type="term" value="F:monoacylglycerol lipase activity"/>
    <property type="evidence" value="ECO:0000250"/>
    <property type="project" value="UniProtKB"/>
</dbReference>
<dbReference type="GO" id="GO:0046464">
    <property type="term" value="P:acylglycerol catabolic process"/>
    <property type="evidence" value="ECO:0000250"/>
    <property type="project" value="UniProtKB"/>
</dbReference>
<dbReference type="GO" id="GO:2001311">
    <property type="term" value="P:lysobisphosphatidic acid metabolic process"/>
    <property type="evidence" value="ECO:0000250"/>
    <property type="project" value="UniProtKB"/>
</dbReference>
<dbReference type="GO" id="GO:0052651">
    <property type="term" value="P:monoacylglycerol catabolic process"/>
    <property type="evidence" value="ECO:0000250"/>
    <property type="project" value="UniProtKB"/>
</dbReference>
<dbReference type="FunFam" id="3.40.50.1820:FF:000082">
    <property type="entry name" value="monoacylglycerol lipase ABHD6"/>
    <property type="match status" value="1"/>
</dbReference>
<dbReference type="Gene3D" id="3.40.50.1820">
    <property type="entry name" value="alpha/beta hydrolase"/>
    <property type="match status" value="1"/>
</dbReference>
<dbReference type="InterPro" id="IPR000073">
    <property type="entry name" value="AB_hydrolase_1"/>
</dbReference>
<dbReference type="InterPro" id="IPR029058">
    <property type="entry name" value="AB_hydrolase_fold"/>
</dbReference>
<dbReference type="InterPro" id="IPR050266">
    <property type="entry name" value="AB_hydrolase_sf"/>
</dbReference>
<dbReference type="PANTHER" id="PTHR43798">
    <property type="entry name" value="MONOACYLGLYCEROL LIPASE"/>
    <property type="match status" value="1"/>
</dbReference>
<dbReference type="PANTHER" id="PTHR43798:SF5">
    <property type="entry name" value="MONOACYLGLYCEROL LIPASE ABHD6"/>
    <property type="match status" value="1"/>
</dbReference>
<dbReference type="Pfam" id="PF00561">
    <property type="entry name" value="Abhydrolase_1"/>
    <property type="match status" value="1"/>
</dbReference>
<dbReference type="PRINTS" id="PR00111">
    <property type="entry name" value="ABHYDROLASE"/>
</dbReference>
<dbReference type="SUPFAM" id="SSF53474">
    <property type="entry name" value="alpha/beta-Hydrolases"/>
    <property type="match status" value="1"/>
</dbReference>
<evidence type="ECO:0000250" key="1">
    <source>
        <dbReference type="UniProtKB" id="Q8R2Y0"/>
    </source>
</evidence>
<evidence type="ECO:0000250" key="2">
    <source>
        <dbReference type="UniProtKB" id="Q99685"/>
    </source>
</evidence>
<evidence type="ECO:0000250" key="3">
    <source>
        <dbReference type="UniProtKB" id="Q9BV23"/>
    </source>
</evidence>
<evidence type="ECO:0000255" key="4"/>
<evidence type="ECO:0000305" key="5"/>
<sequence>MDIDVLNMFLVAGGTLLVPLLAFMTSFLLWPAALIRIYYWYWRRALGMQVKYSSYGNYKFCYTARGKPGNKPSVLMLHGFSAHKDMWLGMVKFLPKNLHLVCVDMPGHEGTSRSALDYYSICGQVKRIHQFVESIGLNKKPFHLVGTSMGGNVAGVYAAQHPTHISSLTLICPAGLMYPIESKFLKQLKVLEKSGDNQRIPLIPSTAGEMEDMLRLCSFVRFKIPQQVLQGLIDERIPHNEFYRKLFLALVDEKSRHSLHENMNKIMAPTQIIWGKQDQVLDVSGAEVLAGSLRGCQVEILENCGHSVVMERPRKSAKLMTDFLSSLQSTDNHKKHD</sequence>
<comment type="function">
    <text evidence="1 3">Lipase that preferentially hydrolysis medium-chain saturated monoacylglycerols including 2-arachidonoylglycerol (By similarity). Through 2-arachidonoylglycerol degradation may regulate endocannabinoid signaling pathways. Also has a lysophosphatidyl lipase activity with a preference for lysophosphatidylglycerol among other lysophospholipids (By similarity). Also able to degrade bis(monoacylglycero)phosphate (BMP) and constitutes the major enzyme for BMP catabolism. BMP, also known as lysobisphosphatidic acid, is enriched in late endosomes and lysosomes and plays a key role in the formation of intraluminal vesicles and in lipid sorting (By similarity).</text>
</comment>
<comment type="catalytic activity">
    <reaction evidence="3">
        <text>Hydrolyzes glycerol monoesters of long-chain fatty acids.</text>
        <dbReference type="EC" id="3.1.1.23"/>
    </reaction>
</comment>
<comment type="catalytic activity">
    <reaction evidence="3">
        <text>1-octanoylglycerol + H2O = octanoate + glycerol + H(+)</text>
        <dbReference type="Rhea" id="RHEA:44328"/>
        <dbReference type="ChEBI" id="CHEBI:15377"/>
        <dbReference type="ChEBI" id="CHEBI:15378"/>
        <dbReference type="ChEBI" id="CHEBI:17754"/>
        <dbReference type="ChEBI" id="CHEBI:25646"/>
        <dbReference type="ChEBI" id="CHEBI:85241"/>
    </reaction>
</comment>
<comment type="catalytic activity">
    <reaction evidence="3">
        <text>1-decanoylglycerol + H2O = decanoate + glycerol + H(+)</text>
        <dbReference type="Rhea" id="RHEA:44320"/>
        <dbReference type="ChEBI" id="CHEBI:15377"/>
        <dbReference type="ChEBI" id="CHEBI:15378"/>
        <dbReference type="ChEBI" id="CHEBI:17754"/>
        <dbReference type="ChEBI" id="CHEBI:27689"/>
        <dbReference type="ChEBI" id="CHEBI:75547"/>
    </reaction>
</comment>
<comment type="catalytic activity">
    <reaction evidence="3">
        <text>1-dodecanoylglycerol + H2O = dodecanoate + glycerol + H(+)</text>
        <dbReference type="Rhea" id="RHEA:44316"/>
        <dbReference type="ChEBI" id="CHEBI:15377"/>
        <dbReference type="ChEBI" id="CHEBI:15378"/>
        <dbReference type="ChEBI" id="CHEBI:17754"/>
        <dbReference type="ChEBI" id="CHEBI:18262"/>
        <dbReference type="ChEBI" id="CHEBI:75539"/>
    </reaction>
</comment>
<comment type="catalytic activity">
    <reaction evidence="3">
        <text>1-tetradecanoylglycerol + H2O = tetradecanoate + glycerol + H(+)</text>
        <dbReference type="Rhea" id="RHEA:44312"/>
        <dbReference type="ChEBI" id="CHEBI:15377"/>
        <dbReference type="ChEBI" id="CHEBI:15378"/>
        <dbReference type="ChEBI" id="CHEBI:17754"/>
        <dbReference type="ChEBI" id="CHEBI:30807"/>
        <dbReference type="ChEBI" id="CHEBI:75562"/>
    </reaction>
</comment>
<comment type="catalytic activity">
    <reaction evidence="3">
        <text>2-hexadecanoylglycerol + H2O = glycerol + hexadecanoate + H(+)</text>
        <dbReference type="Rhea" id="RHEA:39963"/>
        <dbReference type="ChEBI" id="CHEBI:7896"/>
        <dbReference type="ChEBI" id="CHEBI:15377"/>
        <dbReference type="ChEBI" id="CHEBI:15378"/>
        <dbReference type="ChEBI" id="CHEBI:17754"/>
        <dbReference type="ChEBI" id="CHEBI:75455"/>
    </reaction>
</comment>
<comment type="catalytic activity">
    <reaction evidence="3">
        <text>2-(9Z-octadecenoyl)-glycerol + H2O = glycerol + (9Z)-octadecenoate + H(+)</text>
        <dbReference type="Rhea" id="RHEA:38491"/>
        <dbReference type="ChEBI" id="CHEBI:15377"/>
        <dbReference type="ChEBI" id="CHEBI:15378"/>
        <dbReference type="ChEBI" id="CHEBI:17754"/>
        <dbReference type="ChEBI" id="CHEBI:30823"/>
        <dbReference type="ChEBI" id="CHEBI:73990"/>
    </reaction>
</comment>
<comment type="catalytic activity">
    <reaction evidence="3">
        <text>1-(9Z-octadecenoyl)-glycerol + H2O = glycerol + (9Z)-octadecenoate + H(+)</text>
        <dbReference type="Rhea" id="RHEA:38487"/>
        <dbReference type="ChEBI" id="CHEBI:15377"/>
        <dbReference type="ChEBI" id="CHEBI:15378"/>
        <dbReference type="ChEBI" id="CHEBI:17754"/>
        <dbReference type="ChEBI" id="CHEBI:30823"/>
        <dbReference type="ChEBI" id="CHEBI:75342"/>
    </reaction>
</comment>
<comment type="catalytic activity">
    <reaction evidence="3">
        <text>2-(9Z,12Z-octadecadienoyl)-glycerol + H2O = (9Z,12Z)-octadecadienoate + glycerol + H(+)</text>
        <dbReference type="Rhea" id="RHEA:44732"/>
        <dbReference type="ChEBI" id="CHEBI:15377"/>
        <dbReference type="ChEBI" id="CHEBI:15378"/>
        <dbReference type="ChEBI" id="CHEBI:17754"/>
        <dbReference type="ChEBI" id="CHEBI:30245"/>
        <dbReference type="ChEBI" id="CHEBI:75457"/>
    </reaction>
</comment>
<comment type="catalytic activity">
    <reaction evidence="3">
        <text>2-(5Z,8Z,11Z,14Z-eicosatetraenoyl)-glycerol + H2O = glycerol + (5Z,8Z,11Z,14Z)-eicosatetraenoate + H(+)</text>
        <dbReference type="Rhea" id="RHEA:26132"/>
        <dbReference type="ChEBI" id="CHEBI:15377"/>
        <dbReference type="ChEBI" id="CHEBI:15378"/>
        <dbReference type="ChEBI" id="CHEBI:17754"/>
        <dbReference type="ChEBI" id="CHEBI:32395"/>
        <dbReference type="ChEBI" id="CHEBI:52392"/>
    </reaction>
</comment>
<comment type="catalytic activity">
    <reaction evidence="3">
        <text>1-(5Z,8Z,11Z,14Z-eicosatetraenoyl)-glycerol + H2O = glycerol + (5Z,8Z,11Z,14Z)-eicosatetraenoate + H(+)</text>
        <dbReference type="Rhea" id="RHEA:44728"/>
        <dbReference type="ChEBI" id="CHEBI:15377"/>
        <dbReference type="ChEBI" id="CHEBI:15378"/>
        <dbReference type="ChEBI" id="CHEBI:17754"/>
        <dbReference type="ChEBI" id="CHEBI:32395"/>
        <dbReference type="ChEBI" id="CHEBI:75612"/>
    </reaction>
</comment>
<comment type="catalytic activity">
    <reaction evidence="3">
        <text>1-(9Z,12Z-octadecadienoyl)-glycerol + H2O = (9Z,12Z)-octadecadienoate + glycerol + H(+)</text>
        <dbReference type="Rhea" id="RHEA:48428"/>
        <dbReference type="ChEBI" id="CHEBI:15377"/>
        <dbReference type="ChEBI" id="CHEBI:15378"/>
        <dbReference type="ChEBI" id="CHEBI:17754"/>
        <dbReference type="ChEBI" id="CHEBI:30245"/>
        <dbReference type="ChEBI" id="CHEBI:75568"/>
    </reaction>
</comment>
<comment type="catalytic activity">
    <reaction evidence="3">
        <text>3-(9Z-octadecenoyl)-sn-glycero-1-phospho-(3'-(9Z-octadecenoyl)-1'-sn-glycerol) + H2O = 3-(9Z-octadecenoyl)-sn-glycero-1-phospho-(1'-sn-glycerol) + (9Z)-octadecenoate + H(+)</text>
        <dbReference type="Rhea" id="RHEA:55712"/>
        <dbReference type="ChEBI" id="CHEBI:15377"/>
        <dbReference type="ChEBI" id="CHEBI:15378"/>
        <dbReference type="ChEBI" id="CHEBI:30823"/>
        <dbReference type="ChEBI" id="CHEBI:139150"/>
        <dbReference type="ChEBI" id="CHEBI:139152"/>
    </reaction>
</comment>
<comment type="catalytic activity">
    <reaction evidence="1">
        <text>(S,S)-2-(9Z-octadecenoyl)-sn-glycero-1-phospho-(2'-(9Z-octadecenoyl)-1'-sn-glycerol) + H2O = (S,S)-2-(9Z-octadecenoyl)-sn-glycero-1-phospho-(1'-sn-glycerol) + (9Z)-octadecenoate + H(+)</text>
        <dbReference type="Rhea" id="RHEA:55716"/>
        <dbReference type="ChEBI" id="CHEBI:15377"/>
        <dbReference type="ChEBI" id="CHEBI:15378"/>
        <dbReference type="ChEBI" id="CHEBI:30823"/>
        <dbReference type="ChEBI" id="CHEBI:139156"/>
        <dbReference type="ChEBI" id="CHEBI:139157"/>
    </reaction>
</comment>
<comment type="catalytic activity">
    <reaction evidence="1">
        <text>(R,R)-2-(9Z-octadecenoyl)-sn-glycero-3-phospho-(2'-(9Z-octadecenoyl)-3'-sn-glycerol) + H2O = (R,R)-2-(9Z-octadecenoyl)-sn-glycero-3-phospho-(3'-sn-glycerol) + (9Z)-octadecenoate + H(+)</text>
        <dbReference type="Rhea" id="RHEA:55804"/>
        <dbReference type="ChEBI" id="CHEBI:15377"/>
        <dbReference type="ChEBI" id="CHEBI:15378"/>
        <dbReference type="ChEBI" id="CHEBI:30823"/>
        <dbReference type="ChEBI" id="CHEBI:139228"/>
        <dbReference type="ChEBI" id="CHEBI:139230"/>
    </reaction>
</comment>
<comment type="subcellular location">
    <subcellularLocation>
        <location evidence="1">Late endosome membrane</location>
        <topology evidence="4">Single-pass type II membrane protein</topology>
    </subcellularLocation>
    <subcellularLocation>
        <location evidence="1">Lysosome membrane</location>
        <topology evidence="4">Single-pass type II membrane protein</topology>
    </subcellularLocation>
    <subcellularLocation>
        <location evidence="1">Mitochondrion membrane</location>
        <topology evidence="4">Single-pass type II membrane protein</topology>
    </subcellularLocation>
</comment>
<comment type="similarity">
    <text evidence="5">Belongs to the AB hydrolase superfamily.</text>
</comment>
<feature type="chain" id="PRO_0000281579" description="Monoacylglycerol lipase abhd6-B">
    <location>
        <begin position="1"/>
        <end position="337"/>
    </location>
</feature>
<feature type="topological domain" description="Extracellular" evidence="4">
    <location>
        <begin position="1"/>
        <end position="19"/>
    </location>
</feature>
<feature type="transmembrane region" description="Helical; Signal-anchor for type II membrane protein" evidence="4">
    <location>
        <begin position="20"/>
        <end position="42"/>
    </location>
</feature>
<feature type="topological domain" description="Cytoplasmic" evidence="4">
    <location>
        <begin position="43"/>
        <end position="337"/>
    </location>
</feature>
<feature type="domain" description="AB hydrolase-1" evidence="4">
    <location>
        <begin position="72"/>
        <end position="313"/>
    </location>
</feature>
<feature type="active site" description="Nucleophile" evidence="2">
    <location>
        <position position="148"/>
    </location>
</feature>
<feature type="active site" description="Charge relay system" evidence="2">
    <location>
        <position position="278"/>
    </location>
</feature>
<feature type="active site" description="Charge relay system" evidence="2">
    <location>
        <position position="306"/>
    </location>
</feature>